<comment type="function">
    <text evidence="1">Tetrapolymerization of the monopyrrole PBG into the hydroxymethylbilane pre-uroporphyrinogen in several discrete steps.</text>
</comment>
<comment type="catalytic activity">
    <reaction evidence="1">
        <text>4 porphobilinogen + H2O = hydroxymethylbilane + 4 NH4(+)</text>
        <dbReference type="Rhea" id="RHEA:13185"/>
        <dbReference type="ChEBI" id="CHEBI:15377"/>
        <dbReference type="ChEBI" id="CHEBI:28938"/>
        <dbReference type="ChEBI" id="CHEBI:57845"/>
        <dbReference type="ChEBI" id="CHEBI:58126"/>
        <dbReference type="EC" id="2.5.1.61"/>
    </reaction>
</comment>
<comment type="cofactor">
    <cofactor evidence="1">
        <name>dipyrromethane</name>
        <dbReference type="ChEBI" id="CHEBI:60342"/>
    </cofactor>
    <text evidence="1">Binds 1 dipyrromethane group covalently.</text>
</comment>
<comment type="pathway">
    <text evidence="1">Porphyrin-containing compound metabolism; protoporphyrin-IX biosynthesis; coproporphyrinogen-III from 5-aminolevulinate: step 2/4.</text>
</comment>
<comment type="pathway">
    <text evidence="1">Porphyrin-containing compound metabolism; chlorophyll biosynthesis.</text>
</comment>
<comment type="subunit">
    <text evidence="1">Monomer.</text>
</comment>
<comment type="miscellaneous">
    <text evidence="1">The porphobilinogen subunits are added to the dipyrromethane group.</text>
</comment>
<comment type="similarity">
    <text evidence="1">Belongs to the HMBS family.</text>
</comment>
<name>HEM3_SYNE7</name>
<evidence type="ECO:0000255" key="1">
    <source>
        <dbReference type="HAMAP-Rule" id="MF_00260"/>
    </source>
</evidence>
<keyword id="KW-0149">Chlorophyll biosynthesis</keyword>
<keyword id="KW-0627">Porphyrin biosynthesis</keyword>
<keyword id="KW-1185">Reference proteome</keyword>
<keyword id="KW-0808">Transferase</keyword>
<protein>
    <recommendedName>
        <fullName evidence="1">Porphobilinogen deaminase</fullName>
        <shortName evidence="1">PBG</shortName>
        <ecNumber evidence="1">2.5.1.61</ecNumber>
    </recommendedName>
    <alternativeName>
        <fullName evidence="1">Hydroxymethylbilane synthase</fullName>
        <shortName evidence="1">HMBS</shortName>
    </alternativeName>
    <alternativeName>
        <fullName evidence="1">Pre-uroporphyrinogen synthase</fullName>
    </alternativeName>
</protein>
<accession>Q31PM2</accession>
<feature type="chain" id="PRO_0000304283" description="Porphobilinogen deaminase">
    <location>
        <begin position="1"/>
        <end position="320"/>
    </location>
</feature>
<feature type="modified residue" description="S-(dipyrrolylmethanemethyl)cysteine" evidence="1">
    <location>
        <position position="248"/>
    </location>
</feature>
<proteinExistence type="inferred from homology"/>
<organism>
    <name type="scientific">Synechococcus elongatus (strain ATCC 33912 / PCC 7942 / FACHB-805)</name>
    <name type="common">Anacystis nidulans R2</name>
    <dbReference type="NCBI Taxonomy" id="1140"/>
    <lineage>
        <taxon>Bacteria</taxon>
        <taxon>Bacillati</taxon>
        <taxon>Cyanobacteriota</taxon>
        <taxon>Cyanophyceae</taxon>
        <taxon>Synechococcales</taxon>
        <taxon>Synechococcaceae</taxon>
        <taxon>Synechococcus</taxon>
    </lineage>
</organism>
<gene>
    <name evidence="1" type="primary">hemC</name>
    <name type="ordered locus">Synpcc7942_0967</name>
</gene>
<dbReference type="EC" id="2.5.1.61" evidence="1"/>
<dbReference type="EMBL" id="CP000100">
    <property type="protein sequence ID" value="ABB56997.1"/>
    <property type="molecule type" value="Genomic_DNA"/>
</dbReference>
<dbReference type="RefSeq" id="WP_011242887.1">
    <property type="nucleotide sequence ID" value="NZ_JACJTX010000003.1"/>
</dbReference>
<dbReference type="SMR" id="Q31PM2"/>
<dbReference type="STRING" id="1140.Synpcc7942_0967"/>
<dbReference type="PaxDb" id="1140-Synpcc7942_0967"/>
<dbReference type="GeneID" id="72429819"/>
<dbReference type="KEGG" id="syf:Synpcc7942_0967"/>
<dbReference type="eggNOG" id="COG0181">
    <property type="taxonomic scope" value="Bacteria"/>
</dbReference>
<dbReference type="HOGENOM" id="CLU_019704_0_2_3"/>
<dbReference type="OrthoDB" id="9810298at2"/>
<dbReference type="BioCyc" id="SYNEL:SYNPCC7942_0967-MONOMER"/>
<dbReference type="UniPathway" id="UPA00251">
    <property type="reaction ID" value="UER00319"/>
</dbReference>
<dbReference type="UniPathway" id="UPA00668"/>
<dbReference type="Proteomes" id="UP000889800">
    <property type="component" value="Chromosome"/>
</dbReference>
<dbReference type="GO" id="GO:0005737">
    <property type="term" value="C:cytoplasm"/>
    <property type="evidence" value="ECO:0007669"/>
    <property type="project" value="TreeGrafter"/>
</dbReference>
<dbReference type="GO" id="GO:0004418">
    <property type="term" value="F:hydroxymethylbilane synthase activity"/>
    <property type="evidence" value="ECO:0007669"/>
    <property type="project" value="UniProtKB-UniRule"/>
</dbReference>
<dbReference type="GO" id="GO:0015995">
    <property type="term" value="P:chlorophyll biosynthetic process"/>
    <property type="evidence" value="ECO:0007669"/>
    <property type="project" value="UniProtKB-UniRule"/>
</dbReference>
<dbReference type="GO" id="GO:0006782">
    <property type="term" value="P:protoporphyrinogen IX biosynthetic process"/>
    <property type="evidence" value="ECO:0007669"/>
    <property type="project" value="UniProtKB-UniRule"/>
</dbReference>
<dbReference type="CDD" id="cd13645">
    <property type="entry name" value="PBP2_HuPBGD_like"/>
    <property type="match status" value="1"/>
</dbReference>
<dbReference type="FunFam" id="3.30.160.40:FF:000002">
    <property type="entry name" value="Porphobilinogen deaminase"/>
    <property type="match status" value="1"/>
</dbReference>
<dbReference type="FunFam" id="3.40.190.10:FF:000004">
    <property type="entry name" value="Porphobilinogen deaminase"/>
    <property type="match status" value="1"/>
</dbReference>
<dbReference type="FunFam" id="3.40.190.10:FF:000005">
    <property type="entry name" value="Porphobilinogen deaminase"/>
    <property type="match status" value="1"/>
</dbReference>
<dbReference type="Gene3D" id="3.40.190.10">
    <property type="entry name" value="Periplasmic binding protein-like II"/>
    <property type="match status" value="2"/>
</dbReference>
<dbReference type="Gene3D" id="3.30.160.40">
    <property type="entry name" value="Porphobilinogen deaminase, C-terminal domain"/>
    <property type="match status" value="1"/>
</dbReference>
<dbReference type="HAMAP" id="MF_00260">
    <property type="entry name" value="Porphobil_deam"/>
    <property type="match status" value="1"/>
</dbReference>
<dbReference type="InterPro" id="IPR000860">
    <property type="entry name" value="HemC"/>
</dbReference>
<dbReference type="InterPro" id="IPR022419">
    <property type="entry name" value="Porphobilin_deaminase_cofac_BS"/>
</dbReference>
<dbReference type="InterPro" id="IPR022417">
    <property type="entry name" value="Porphobilin_deaminase_N"/>
</dbReference>
<dbReference type="InterPro" id="IPR022418">
    <property type="entry name" value="Porphobilinogen_deaminase_C"/>
</dbReference>
<dbReference type="InterPro" id="IPR036803">
    <property type="entry name" value="Porphobilinogen_deaminase_C_sf"/>
</dbReference>
<dbReference type="NCBIfam" id="TIGR00212">
    <property type="entry name" value="hemC"/>
    <property type="match status" value="1"/>
</dbReference>
<dbReference type="PANTHER" id="PTHR11557">
    <property type="entry name" value="PORPHOBILINOGEN DEAMINASE"/>
    <property type="match status" value="1"/>
</dbReference>
<dbReference type="PANTHER" id="PTHR11557:SF0">
    <property type="entry name" value="PORPHOBILINOGEN DEAMINASE"/>
    <property type="match status" value="1"/>
</dbReference>
<dbReference type="Pfam" id="PF01379">
    <property type="entry name" value="Porphobil_deam"/>
    <property type="match status" value="1"/>
</dbReference>
<dbReference type="Pfam" id="PF03900">
    <property type="entry name" value="Porphobil_deamC"/>
    <property type="match status" value="1"/>
</dbReference>
<dbReference type="PIRSF" id="PIRSF001438">
    <property type="entry name" value="4pyrrol_synth_OHMeBilane_synth"/>
    <property type="match status" value="1"/>
</dbReference>
<dbReference type="PRINTS" id="PR00151">
    <property type="entry name" value="PORPHBDMNASE"/>
</dbReference>
<dbReference type="SUPFAM" id="SSF53850">
    <property type="entry name" value="Periplasmic binding protein-like II"/>
    <property type="match status" value="1"/>
</dbReference>
<dbReference type="SUPFAM" id="SSF54782">
    <property type="entry name" value="Porphobilinogen deaminase (hydroxymethylbilane synthase), C-terminal domain"/>
    <property type="match status" value="1"/>
</dbReference>
<dbReference type="PROSITE" id="PS00533">
    <property type="entry name" value="PORPHOBILINOGEN_DEAM"/>
    <property type="match status" value="1"/>
</dbReference>
<sequence length="320" mass="34778">MVSSPARPIRIGSRKSQLALVQTHWVQGELQRLYPDRQFDVQTMSTQGDIILDVALAKIGDKGLFTKELEVAMLAGEVDFAVHSLKDLPTRLPEGLILGCVTEREDPADALVVHDRFKDHQLETLPEGTVIGTSSLRRLAQLRHHYPHLQFKDVRGNLNTRLAKLDAGEYDALILAAAGLQRLSMADRIHQLIPAAVSLHAVGQGALGIECRAEDPEILELLKALEHEPTSQRCLAERAFLRELEGGCQVPIGVNTAIADGTLTLTGMVASLDGQRLLRDQVSGPTSDPEALGLALAAQLKAQGAKEILDEIFATVRPEA</sequence>
<reference key="1">
    <citation type="submission" date="2005-08" db="EMBL/GenBank/DDBJ databases">
        <title>Complete sequence of chromosome 1 of Synechococcus elongatus PCC 7942.</title>
        <authorList>
            <consortium name="US DOE Joint Genome Institute"/>
            <person name="Copeland A."/>
            <person name="Lucas S."/>
            <person name="Lapidus A."/>
            <person name="Barry K."/>
            <person name="Detter J.C."/>
            <person name="Glavina T."/>
            <person name="Hammon N."/>
            <person name="Israni S."/>
            <person name="Pitluck S."/>
            <person name="Schmutz J."/>
            <person name="Larimer F."/>
            <person name="Land M."/>
            <person name="Kyrpides N."/>
            <person name="Lykidis A."/>
            <person name="Golden S."/>
            <person name="Richardson P."/>
        </authorList>
    </citation>
    <scope>NUCLEOTIDE SEQUENCE [LARGE SCALE GENOMIC DNA]</scope>
    <source>
        <strain>ATCC 33912 / PCC 7942 / FACHB-805</strain>
    </source>
</reference>